<accession>Q31UE2</accession>
<dbReference type="EC" id="3.4.13.9" evidence="1"/>
<dbReference type="EMBL" id="CP000036">
    <property type="protein sequence ID" value="ABB68316.1"/>
    <property type="molecule type" value="Genomic_DNA"/>
</dbReference>
<dbReference type="RefSeq" id="WP_000444570.1">
    <property type="nucleotide sequence ID" value="NC_007613.1"/>
</dbReference>
<dbReference type="SMR" id="Q31UE2"/>
<dbReference type="MEROPS" id="M24.003"/>
<dbReference type="KEGG" id="sbo:SBO_3859"/>
<dbReference type="HOGENOM" id="CLU_050675_0_0_6"/>
<dbReference type="Proteomes" id="UP000007067">
    <property type="component" value="Chromosome"/>
</dbReference>
<dbReference type="GO" id="GO:0005829">
    <property type="term" value="C:cytosol"/>
    <property type="evidence" value="ECO:0007669"/>
    <property type="project" value="TreeGrafter"/>
</dbReference>
<dbReference type="GO" id="GO:0004177">
    <property type="term" value="F:aminopeptidase activity"/>
    <property type="evidence" value="ECO:0007669"/>
    <property type="project" value="TreeGrafter"/>
</dbReference>
<dbReference type="GO" id="GO:0046872">
    <property type="term" value="F:metal ion binding"/>
    <property type="evidence" value="ECO:0007669"/>
    <property type="project" value="UniProtKB-KW"/>
</dbReference>
<dbReference type="GO" id="GO:0008235">
    <property type="term" value="F:metalloexopeptidase activity"/>
    <property type="evidence" value="ECO:0007669"/>
    <property type="project" value="UniProtKB-UniRule"/>
</dbReference>
<dbReference type="GO" id="GO:0016795">
    <property type="term" value="F:phosphoric triester hydrolase activity"/>
    <property type="evidence" value="ECO:0007669"/>
    <property type="project" value="InterPro"/>
</dbReference>
<dbReference type="GO" id="GO:0102009">
    <property type="term" value="F:proline dipeptidase activity"/>
    <property type="evidence" value="ECO:0007669"/>
    <property type="project" value="UniProtKB-EC"/>
</dbReference>
<dbReference type="GO" id="GO:0006508">
    <property type="term" value="P:proteolysis"/>
    <property type="evidence" value="ECO:0007669"/>
    <property type="project" value="UniProtKB-KW"/>
</dbReference>
<dbReference type="CDD" id="cd01087">
    <property type="entry name" value="Prolidase"/>
    <property type="match status" value="1"/>
</dbReference>
<dbReference type="FunFam" id="3.40.350.10:FF:000002">
    <property type="entry name" value="Xaa-Pro dipeptidase"/>
    <property type="match status" value="1"/>
</dbReference>
<dbReference type="FunFam" id="3.90.230.10:FF:000006">
    <property type="entry name" value="Xaa-Pro dipeptidase"/>
    <property type="match status" value="1"/>
</dbReference>
<dbReference type="Gene3D" id="3.90.230.10">
    <property type="entry name" value="Creatinase/methionine aminopeptidase superfamily"/>
    <property type="match status" value="1"/>
</dbReference>
<dbReference type="Gene3D" id="3.40.350.10">
    <property type="entry name" value="Creatinase/prolidase N-terminal domain"/>
    <property type="match status" value="1"/>
</dbReference>
<dbReference type="HAMAP" id="MF_01279">
    <property type="entry name" value="X_Pro_dipeptid"/>
    <property type="match status" value="1"/>
</dbReference>
<dbReference type="InterPro" id="IPR029149">
    <property type="entry name" value="Creatin/AminoP/Spt16_N"/>
</dbReference>
<dbReference type="InterPro" id="IPR036005">
    <property type="entry name" value="Creatinase/aminopeptidase-like"/>
</dbReference>
<dbReference type="InterPro" id="IPR048819">
    <property type="entry name" value="PepQ_N"/>
</dbReference>
<dbReference type="InterPro" id="IPR000994">
    <property type="entry name" value="Pept_M24"/>
</dbReference>
<dbReference type="InterPro" id="IPR001131">
    <property type="entry name" value="Peptidase_M24B_aminopep-P_CS"/>
</dbReference>
<dbReference type="InterPro" id="IPR052433">
    <property type="entry name" value="X-Pro_dipept-like"/>
</dbReference>
<dbReference type="InterPro" id="IPR022846">
    <property type="entry name" value="X_Pro_dipept"/>
</dbReference>
<dbReference type="NCBIfam" id="NF010133">
    <property type="entry name" value="PRK13607.1"/>
    <property type="match status" value="1"/>
</dbReference>
<dbReference type="PANTHER" id="PTHR43226">
    <property type="entry name" value="XAA-PRO AMINOPEPTIDASE 3"/>
    <property type="match status" value="1"/>
</dbReference>
<dbReference type="PANTHER" id="PTHR43226:SF8">
    <property type="entry name" value="XAA-PRO DIPEPTIDASE"/>
    <property type="match status" value="1"/>
</dbReference>
<dbReference type="Pfam" id="PF21216">
    <property type="entry name" value="PepQ_N"/>
    <property type="match status" value="1"/>
</dbReference>
<dbReference type="Pfam" id="PF00557">
    <property type="entry name" value="Peptidase_M24"/>
    <property type="match status" value="1"/>
</dbReference>
<dbReference type="SUPFAM" id="SSF55920">
    <property type="entry name" value="Creatinase/aminopeptidase"/>
    <property type="match status" value="1"/>
</dbReference>
<dbReference type="PROSITE" id="PS00491">
    <property type="entry name" value="PROLINE_PEPTIDASE"/>
    <property type="match status" value="1"/>
</dbReference>
<gene>
    <name evidence="1" type="primary">pepQ</name>
    <name type="ordered locus">SBO_3859</name>
</gene>
<comment type="function">
    <text evidence="1">Splits dipeptides with a prolyl residue in the C-terminal position.</text>
</comment>
<comment type="catalytic activity">
    <reaction evidence="1">
        <text>Xaa-L-Pro dipeptide + H2O = an L-alpha-amino acid + L-proline</text>
        <dbReference type="Rhea" id="RHEA:76407"/>
        <dbReference type="ChEBI" id="CHEBI:15377"/>
        <dbReference type="ChEBI" id="CHEBI:59869"/>
        <dbReference type="ChEBI" id="CHEBI:60039"/>
        <dbReference type="ChEBI" id="CHEBI:195196"/>
        <dbReference type="EC" id="3.4.13.9"/>
    </reaction>
</comment>
<comment type="cofactor">
    <cofactor evidence="1">
        <name>Mn(2+)</name>
        <dbReference type="ChEBI" id="CHEBI:29035"/>
    </cofactor>
    <text evidence="1">Binds 2 manganese ions per subunit.</text>
</comment>
<comment type="similarity">
    <text evidence="1">Belongs to the peptidase M24B family. Bacterial-type prolidase subfamily.</text>
</comment>
<reference key="1">
    <citation type="journal article" date="2005" name="Nucleic Acids Res.">
        <title>Genome dynamics and diversity of Shigella species, the etiologic agents of bacillary dysentery.</title>
        <authorList>
            <person name="Yang F."/>
            <person name="Yang J."/>
            <person name="Zhang X."/>
            <person name="Chen L."/>
            <person name="Jiang Y."/>
            <person name="Yan Y."/>
            <person name="Tang X."/>
            <person name="Wang J."/>
            <person name="Xiong Z."/>
            <person name="Dong J."/>
            <person name="Xue Y."/>
            <person name="Zhu Y."/>
            <person name="Xu X."/>
            <person name="Sun L."/>
            <person name="Chen S."/>
            <person name="Nie H."/>
            <person name="Peng J."/>
            <person name="Xu J."/>
            <person name="Wang Y."/>
            <person name="Yuan Z."/>
            <person name="Wen Y."/>
            <person name="Yao Z."/>
            <person name="Shen Y."/>
            <person name="Qiang B."/>
            <person name="Hou Y."/>
            <person name="Yu J."/>
            <person name="Jin Q."/>
        </authorList>
    </citation>
    <scope>NUCLEOTIDE SEQUENCE [LARGE SCALE GENOMIC DNA]</scope>
    <source>
        <strain>Sb227</strain>
    </source>
</reference>
<keyword id="KW-0224">Dipeptidase</keyword>
<keyword id="KW-0378">Hydrolase</keyword>
<keyword id="KW-0464">Manganese</keyword>
<keyword id="KW-0479">Metal-binding</keyword>
<keyword id="KW-0482">Metalloprotease</keyword>
<keyword id="KW-0645">Protease</keyword>
<evidence type="ECO:0000255" key="1">
    <source>
        <dbReference type="HAMAP-Rule" id="MF_01279"/>
    </source>
</evidence>
<proteinExistence type="inferred from homology"/>
<organism>
    <name type="scientific">Shigella boydii serotype 4 (strain Sb227)</name>
    <dbReference type="NCBI Taxonomy" id="300268"/>
    <lineage>
        <taxon>Bacteria</taxon>
        <taxon>Pseudomonadati</taxon>
        <taxon>Pseudomonadota</taxon>
        <taxon>Gammaproteobacteria</taxon>
        <taxon>Enterobacterales</taxon>
        <taxon>Enterobacteriaceae</taxon>
        <taxon>Shigella</taxon>
    </lineage>
</organism>
<feature type="chain" id="PRO_0000303866" description="Xaa-Pro dipeptidase">
    <location>
        <begin position="1"/>
        <end position="443"/>
    </location>
</feature>
<feature type="binding site" evidence="1">
    <location>
        <position position="246"/>
    </location>
    <ligand>
        <name>Mn(2+)</name>
        <dbReference type="ChEBI" id="CHEBI:29035"/>
        <label>2</label>
    </ligand>
</feature>
<feature type="binding site" evidence="1">
    <location>
        <position position="257"/>
    </location>
    <ligand>
        <name>Mn(2+)</name>
        <dbReference type="ChEBI" id="CHEBI:29035"/>
        <label>1</label>
    </ligand>
</feature>
<feature type="binding site" evidence="1">
    <location>
        <position position="257"/>
    </location>
    <ligand>
        <name>Mn(2+)</name>
        <dbReference type="ChEBI" id="CHEBI:29035"/>
        <label>2</label>
    </ligand>
</feature>
<feature type="binding site" evidence="1">
    <location>
        <position position="339"/>
    </location>
    <ligand>
        <name>Mn(2+)</name>
        <dbReference type="ChEBI" id="CHEBI:29035"/>
        <label>1</label>
    </ligand>
</feature>
<feature type="binding site" evidence="1">
    <location>
        <position position="384"/>
    </location>
    <ligand>
        <name>Mn(2+)</name>
        <dbReference type="ChEBI" id="CHEBI:29035"/>
        <label>1</label>
    </ligand>
</feature>
<feature type="binding site" evidence="1">
    <location>
        <position position="423"/>
    </location>
    <ligand>
        <name>Mn(2+)</name>
        <dbReference type="ChEBI" id="CHEBI:29035"/>
        <label>1</label>
    </ligand>
</feature>
<feature type="binding site" evidence="1">
    <location>
        <position position="423"/>
    </location>
    <ligand>
        <name>Mn(2+)</name>
        <dbReference type="ChEBI" id="CHEBI:29035"/>
        <label>2</label>
    </ligand>
</feature>
<sequence length="443" mass="50222">MESLASLYKNHIATLQERTRDALARFKLDALLIHSGELFNVFLDDHPYPFKVNPQFKAWVPVTQVPNCWLLVDGVNKPKLWFYLPVDYWHNVEPLPTSFWTEDVEVIALPKADGIGSLLPAARGNIGYIGPVPERALQLGIEASNINPKGVIDYLHYYRSFKTEYELACMREAQKMAVNGHRAAEEAFRSGMSEFDINIAYLTATGHRDTDVPYSNIVALNEHASVLHYTKLDHQAPEEMRSFLLDAGAEYNGYAADLTRTWSAKSDNDYAQLVKDVNDEQLALIATMKAGVSYVDYHLQFHQRIAKLLRKHQIITDMSEEAMVENDLTGPFMPHGIGHPLGLQVHDVAGFMQDDSGTHLAAPAKYPYLRCTRILQPGMVLTIEPGIYFIESLLAPWREGQFSKHFNWQKIEALKPFSGIRIEDNVVIHENNVENMTRDLKLA</sequence>
<name>PEPQ_SHIBS</name>
<protein>
    <recommendedName>
        <fullName evidence="1">Xaa-Pro dipeptidase</fullName>
        <shortName evidence="1">X-Pro dipeptidase</shortName>
        <ecNumber evidence="1">3.4.13.9</ecNumber>
    </recommendedName>
    <alternativeName>
        <fullName evidence="1">Imidodipeptidase</fullName>
    </alternativeName>
    <alternativeName>
        <fullName evidence="1">Proline dipeptidase</fullName>
        <shortName evidence="1">Prolidase</shortName>
    </alternativeName>
</protein>